<accession>C4L9J8</accession>
<name>CYSI_TOLAT</name>
<feature type="chain" id="PRO_0000388525" description="Sulfite reductase [NADPH] hemoprotein beta-component">
    <location>
        <begin position="1"/>
        <end position="562"/>
    </location>
</feature>
<feature type="binding site" evidence="1">
    <location>
        <position position="425"/>
    </location>
    <ligand>
        <name>[4Fe-4S] cluster</name>
        <dbReference type="ChEBI" id="CHEBI:49883"/>
    </ligand>
</feature>
<feature type="binding site" evidence="1">
    <location>
        <position position="431"/>
    </location>
    <ligand>
        <name>[4Fe-4S] cluster</name>
        <dbReference type="ChEBI" id="CHEBI:49883"/>
    </ligand>
</feature>
<feature type="binding site" evidence="1">
    <location>
        <position position="470"/>
    </location>
    <ligand>
        <name>[4Fe-4S] cluster</name>
        <dbReference type="ChEBI" id="CHEBI:49883"/>
    </ligand>
</feature>
<feature type="binding site" evidence="1">
    <location>
        <position position="474"/>
    </location>
    <ligand>
        <name>[4Fe-4S] cluster</name>
        <dbReference type="ChEBI" id="CHEBI:49883"/>
    </ligand>
</feature>
<feature type="binding site" description="axial binding residue" evidence="1">
    <location>
        <position position="474"/>
    </location>
    <ligand>
        <name>siroheme</name>
        <dbReference type="ChEBI" id="CHEBI:60052"/>
    </ligand>
    <ligandPart>
        <name>Fe</name>
        <dbReference type="ChEBI" id="CHEBI:18248"/>
    </ligandPart>
</feature>
<evidence type="ECO:0000255" key="1">
    <source>
        <dbReference type="HAMAP-Rule" id="MF_01540"/>
    </source>
</evidence>
<organism>
    <name type="scientific">Tolumonas auensis (strain DSM 9187 / NBRC 110442 / TA 4)</name>
    <dbReference type="NCBI Taxonomy" id="595494"/>
    <lineage>
        <taxon>Bacteria</taxon>
        <taxon>Pseudomonadati</taxon>
        <taxon>Pseudomonadota</taxon>
        <taxon>Gammaproteobacteria</taxon>
        <taxon>Aeromonadales</taxon>
        <taxon>Aeromonadaceae</taxon>
        <taxon>Tolumonas</taxon>
    </lineage>
</organism>
<keyword id="KW-0004">4Fe-4S</keyword>
<keyword id="KW-0028">Amino-acid biosynthesis</keyword>
<keyword id="KW-0198">Cysteine biosynthesis</keyword>
<keyword id="KW-0349">Heme</keyword>
<keyword id="KW-0408">Iron</keyword>
<keyword id="KW-0411">Iron-sulfur</keyword>
<keyword id="KW-0479">Metal-binding</keyword>
<keyword id="KW-0521">NADP</keyword>
<keyword id="KW-0560">Oxidoreductase</keyword>
<keyword id="KW-1185">Reference proteome</keyword>
<gene>
    <name evidence="1" type="primary">cysI</name>
    <name type="ordered locus">Tola_2354</name>
</gene>
<sequence length="562" mass="63165">MSEQKLSDNERLKAESNFLRGTIELDLKNDLTGGFTGDNFQLIRLHGMYQQDDRDIRAERAQQKLEPLHNVMLRARMPGGIITPEQWLGIDKFAHDHTMYGSIRLTTRQTFQFHGVLKPNIKMMHQTLNKYGIDSIATAGDVNRNVLCTSNPVESELHQEAYEWAKKISEHLLPKTRAYAEIWLDGEKLGPDEEPILGSTYLPRKFKTTVVIPPHNDIDVHANDLNFVAIAEDGKLVGFNVLVGGGLAMTHGNKETFPRKADDFGFIRKEDTLKFAEAVVTTQRDWGNRVNRQNAKTKYTLERVGVDAFKAEVEKRTGIKFEESRPYVFTSRGDRFGWVEGIDGKQHLTLFIENGRILDFPGKPLKTGLAEIAKIHKGDFRMTANQNLIIAGVPKKDKAKIEKIARAHGLIDDAITEQRKNSMACVALPTCPLAMAEAERFLPAFTTQIEAVMAKHGLADDHVIFRVTGCPNGCGRAMLAEIGLVGKAMDRYNFYIGGNREGTRIPRQYRENITSAEILKEIDALLGRWAKERNENEGFGDFVIRAGIVKPVVDSAKDFYAA</sequence>
<comment type="function">
    <text evidence="1">Component of the sulfite reductase complex that catalyzes the 6-electron reduction of sulfite to sulfide. This is one of several activities required for the biosynthesis of L-cysteine from sulfate.</text>
</comment>
<comment type="catalytic activity">
    <reaction evidence="1">
        <text>hydrogen sulfide + 3 NADP(+) + 3 H2O = sulfite + 3 NADPH + 4 H(+)</text>
        <dbReference type="Rhea" id="RHEA:13801"/>
        <dbReference type="ChEBI" id="CHEBI:15377"/>
        <dbReference type="ChEBI" id="CHEBI:15378"/>
        <dbReference type="ChEBI" id="CHEBI:17359"/>
        <dbReference type="ChEBI" id="CHEBI:29919"/>
        <dbReference type="ChEBI" id="CHEBI:57783"/>
        <dbReference type="ChEBI" id="CHEBI:58349"/>
        <dbReference type="EC" id="1.8.1.2"/>
    </reaction>
</comment>
<comment type="cofactor">
    <cofactor evidence="1">
        <name>siroheme</name>
        <dbReference type="ChEBI" id="CHEBI:60052"/>
    </cofactor>
    <text evidence="1">Binds 1 siroheme per subunit.</text>
</comment>
<comment type="cofactor">
    <cofactor evidence="1">
        <name>[4Fe-4S] cluster</name>
        <dbReference type="ChEBI" id="CHEBI:49883"/>
    </cofactor>
    <text evidence="1">Binds 1 [4Fe-4S] cluster per subunit.</text>
</comment>
<comment type="pathway">
    <text evidence="1">Sulfur metabolism; hydrogen sulfide biosynthesis; hydrogen sulfide from sulfite (NADPH route): step 1/1.</text>
</comment>
<comment type="subunit">
    <text evidence="1">Alpha(8)-beta(8). The alpha component is a flavoprotein, the beta component is a hemoprotein.</text>
</comment>
<comment type="similarity">
    <text evidence="1">Belongs to the nitrite and sulfite reductase 4Fe-4S domain family.</text>
</comment>
<protein>
    <recommendedName>
        <fullName evidence="1">Sulfite reductase [NADPH] hemoprotein beta-component</fullName>
        <shortName evidence="1">SiR-HP</shortName>
        <shortName evidence="1">SiRHP</shortName>
        <ecNumber evidence="1">1.8.1.2</ecNumber>
    </recommendedName>
</protein>
<reference key="1">
    <citation type="submission" date="2009-05" db="EMBL/GenBank/DDBJ databases">
        <title>Complete sequence of Tolumonas auensis DSM 9187.</title>
        <authorList>
            <consortium name="US DOE Joint Genome Institute"/>
            <person name="Lucas S."/>
            <person name="Copeland A."/>
            <person name="Lapidus A."/>
            <person name="Glavina del Rio T."/>
            <person name="Tice H."/>
            <person name="Bruce D."/>
            <person name="Goodwin L."/>
            <person name="Pitluck S."/>
            <person name="Chertkov O."/>
            <person name="Brettin T."/>
            <person name="Detter J.C."/>
            <person name="Han C."/>
            <person name="Larimer F."/>
            <person name="Land M."/>
            <person name="Hauser L."/>
            <person name="Kyrpides N."/>
            <person name="Mikhailova N."/>
            <person name="Spring S."/>
            <person name="Beller H."/>
        </authorList>
    </citation>
    <scope>NUCLEOTIDE SEQUENCE [LARGE SCALE GENOMIC DNA]</scope>
    <source>
        <strain>DSM 9187 / NBRC 110442 / TA 4</strain>
    </source>
</reference>
<proteinExistence type="inferred from homology"/>
<dbReference type="EC" id="1.8.1.2" evidence="1"/>
<dbReference type="EMBL" id="CP001616">
    <property type="protein sequence ID" value="ACQ93951.1"/>
    <property type="molecule type" value="Genomic_DNA"/>
</dbReference>
<dbReference type="RefSeq" id="WP_015879419.1">
    <property type="nucleotide sequence ID" value="NC_012691.1"/>
</dbReference>
<dbReference type="SMR" id="C4L9J8"/>
<dbReference type="STRING" id="595494.Tola_2354"/>
<dbReference type="KEGG" id="tau:Tola_2354"/>
<dbReference type="eggNOG" id="COG0155">
    <property type="taxonomic scope" value="Bacteria"/>
</dbReference>
<dbReference type="HOGENOM" id="CLU_001975_3_2_6"/>
<dbReference type="OrthoDB" id="3189055at2"/>
<dbReference type="UniPathway" id="UPA00140">
    <property type="reaction ID" value="UER00207"/>
</dbReference>
<dbReference type="Proteomes" id="UP000009073">
    <property type="component" value="Chromosome"/>
</dbReference>
<dbReference type="GO" id="GO:0009337">
    <property type="term" value="C:sulfite reductase complex (NADPH)"/>
    <property type="evidence" value="ECO:0007669"/>
    <property type="project" value="InterPro"/>
</dbReference>
<dbReference type="GO" id="GO:0051539">
    <property type="term" value="F:4 iron, 4 sulfur cluster binding"/>
    <property type="evidence" value="ECO:0007669"/>
    <property type="project" value="UniProtKB-KW"/>
</dbReference>
<dbReference type="GO" id="GO:0020037">
    <property type="term" value="F:heme binding"/>
    <property type="evidence" value="ECO:0007669"/>
    <property type="project" value="InterPro"/>
</dbReference>
<dbReference type="GO" id="GO:0046872">
    <property type="term" value="F:metal ion binding"/>
    <property type="evidence" value="ECO:0007669"/>
    <property type="project" value="UniProtKB-KW"/>
</dbReference>
<dbReference type="GO" id="GO:0050661">
    <property type="term" value="F:NADP binding"/>
    <property type="evidence" value="ECO:0007669"/>
    <property type="project" value="InterPro"/>
</dbReference>
<dbReference type="GO" id="GO:0050311">
    <property type="term" value="F:sulfite reductase (ferredoxin) activity"/>
    <property type="evidence" value="ECO:0007669"/>
    <property type="project" value="TreeGrafter"/>
</dbReference>
<dbReference type="GO" id="GO:0004783">
    <property type="term" value="F:sulfite reductase (NADPH) activity"/>
    <property type="evidence" value="ECO:0007669"/>
    <property type="project" value="UniProtKB-UniRule"/>
</dbReference>
<dbReference type="GO" id="GO:0019344">
    <property type="term" value="P:cysteine biosynthetic process"/>
    <property type="evidence" value="ECO:0007669"/>
    <property type="project" value="UniProtKB-KW"/>
</dbReference>
<dbReference type="GO" id="GO:0070814">
    <property type="term" value="P:hydrogen sulfide biosynthetic process"/>
    <property type="evidence" value="ECO:0007669"/>
    <property type="project" value="UniProtKB-UniRule"/>
</dbReference>
<dbReference type="GO" id="GO:0000103">
    <property type="term" value="P:sulfate assimilation"/>
    <property type="evidence" value="ECO:0007669"/>
    <property type="project" value="UniProtKB-UniRule"/>
</dbReference>
<dbReference type="FunFam" id="3.30.413.10:FF:000003">
    <property type="entry name" value="Sulfite reductase [NADPH] hemoprotein beta-component"/>
    <property type="match status" value="1"/>
</dbReference>
<dbReference type="FunFam" id="3.30.413.10:FF:000004">
    <property type="entry name" value="Sulfite reductase [NADPH] hemoprotein beta-component"/>
    <property type="match status" value="1"/>
</dbReference>
<dbReference type="Gene3D" id="3.30.413.10">
    <property type="entry name" value="Sulfite Reductase Hemoprotein, domain 1"/>
    <property type="match status" value="2"/>
</dbReference>
<dbReference type="HAMAP" id="MF_01540">
    <property type="entry name" value="CysI"/>
    <property type="match status" value="1"/>
</dbReference>
<dbReference type="InterPro" id="IPR011786">
    <property type="entry name" value="CysI"/>
</dbReference>
<dbReference type="InterPro" id="IPR005117">
    <property type="entry name" value="NiRdtase/SiRdtase_haem-b_fer"/>
</dbReference>
<dbReference type="InterPro" id="IPR036136">
    <property type="entry name" value="Nit/Sulf_reduc_fer-like_dom_sf"/>
</dbReference>
<dbReference type="InterPro" id="IPR006067">
    <property type="entry name" value="NO2/SO3_Rdtase_4Fe4S_dom"/>
</dbReference>
<dbReference type="InterPro" id="IPR045169">
    <property type="entry name" value="NO2/SO3_Rdtase_4Fe4S_prot"/>
</dbReference>
<dbReference type="InterPro" id="IPR045854">
    <property type="entry name" value="NO2/SO3_Rdtase_4Fe4S_sf"/>
</dbReference>
<dbReference type="InterPro" id="IPR006066">
    <property type="entry name" value="NO2/SO3_Rdtase_FeS/sirohaem_BS"/>
</dbReference>
<dbReference type="NCBIfam" id="TIGR02041">
    <property type="entry name" value="CysI"/>
    <property type="match status" value="1"/>
</dbReference>
<dbReference type="NCBIfam" id="NF010029">
    <property type="entry name" value="PRK13504.1"/>
    <property type="match status" value="1"/>
</dbReference>
<dbReference type="PANTHER" id="PTHR11493:SF47">
    <property type="entry name" value="SULFITE REDUCTASE [NADPH] SUBUNIT BETA"/>
    <property type="match status" value="1"/>
</dbReference>
<dbReference type="PANTHER" id="PTHR11493">
    <property type="entry name" value="SULFITE REDUCTASE [NADPH] SUBUNIT BETA-RELATED"/>
    <property type="match status" value="1"/>
</dbReference>
<dbReference type="Pfam" id="PF01077">
    <property type="entry name" value="NIR_SIR"/>
    <property type="match status" value="1"/>
</dbReference>
<dbReference type="Pfam" id="PF03460">
    <property type="entry name" value="NIR_SIR_ferr"/>
    <property type="match status" value="2"/>
</dbReference>
<dbReference type="PRINTS" id="PR00397">
    <property type="entry name" value="SIROHAEM"/>
</dbReference>
<dbReference type="SUPFAM" id="SSF56014">
    <property type="entry name" value="Nitrite and sulphite reductase 4Fe-4S domain-like"/>
    <property type="match status" value="2"/>
</dbReference>
<dbReference type="SUPFAM" id="SSF55124">
    <property type="entry name" value="Nitrite/Sulfite reductase N-terminal domain-like"/>
    <property type="match status" value="2"/>
</dbReference>
<dbReference type="PROSITE" id="PS00365">
    <property type="entry name" value="NIR_SIR"/>
    <property type="match status" value="1"/>
</dbReference>